<accession>Q9D486</accession>
<accession>Q69ZD2</accession>
<accession>Q8C3N2</accession>
<accession>Q8K148</accession>
<proteinExistence type="evidence at protein level"/>
<gene>
    <name type="primary">Cmip</name>
    <name type="synonym">Kiaa1694</name>
</gene>
<organism>
    <name type="scientific">Mus musculus</name>
    <name type="common">Mouse</name>
    <dbReference type="NCBI Taxonomy" id="10090"/>
    <lineage>
        <taxon>Eukaryota</taxon>
        <taxon>Metazoa</taxon>
        <taxon>Chordata</taxon>
        <taxon>Craniata</taxon>
        <taxon>Vertebrata</taxon>
        <taxon>Euteleostomi</taxon>
        <taxon>Mammalia</taxon>
        <taxon>Eutheria</taxon>
        <taxon>Euarchontoglires</taxon>
        <taxon>Glires</taxon>
        <taxon>Rodentia</taxon>
        <taxon>Myomorpha</taxon>
        <taxon>Muroidea</taxon>
        <taxon>Muridae</taxon>
        <taxon>Murinae</taxon>
        <taxon>Mus</taxon>
        <taxon>Mus</taxon>
    </lineage>
</organism>
<keyword id="KW-0025">Alternative splicing</keyword>
<keyword id="KW-0963">Cytoplasm</keyword>
<keyword id="KW-0433">Leucine-rich repeat</keyword>
<keyword id="KW-0539">Nucleus</keyword>
<keyword id="KW-0597">Phosphoprotein</keyword>
<keyword id="KW-1185">Reference proteome</keyword>
<keyword id="KW-0677">Repeat</keyword>
<reference key="1">
    <citation type="journal article" date="2005" name="Science">
        <title>The transcriptional landscape of the mammalian genome.</title>
        <authorList>
            <person name="Carninci P."/>
            <person name="Kasukawa T."/>
            <person name="Katayama S."/>
            <person name="Gough J."/>
            <person name="Frith M.C."/>
            <person name="Maeda N."/>
            <person name="Oyama R."/>
            <person name="Ravasi T."/>
            <person name="Lenhard B."/>
            <person name="Wells C."/>
            <person name="Kodzius R."/>
            <person name="Shimokawa K."/>
            <person name="Bajic V.B."/>
            <person name="Brenner S.E."/>
            <person name="Batalov S."/>
            <person name="Forrest A.R."/>
            <person name="Zavolan M."/>
            <person name="Davis M.J."/>
            <person name="Wilming L.G."/>
            <person name="Aidinis V."/>
            <person name="Allen J.E."/>
            <person name="Ambesi-Impiombato A."/>
            <person name="Apweiler R."/>
            <person name="Aturaliya R.N."/>
            <person name="Bailey T.L."/>
            <person name="Bansal M."/>
            <person name="Baxter L."/>
            <person name="Beisel K.W."/>
            <person name="Bersano T."/>
            <person name="Bono H."/>
            <person name="Chalk A.M."/>
            <person name="Chiu K.P."/>
            <person name="Choudhary V."/>
            <person name="Christoffels A."/>
            <person name="Clutterbuck D.R."/>
            <person name="Crowe M.L."/>
            <person name="Dalla E."/>
            <person name="Dalrymple B.P."/>
            <person name="de Bono B."/>
            <person name="Della Gatta G."/>
            <person name="di Bernardo D."/>
            <person name="Down T."/>
            <person name="Engstrom P."/>
            <person name="Fagiolini M."/>
            <person name="Faulkner G."/>
            <person name="Fletcher C.F."/>
            <person name="Fukushima T."/>
            <person name="Furuno M."/>
            <person name="Futaki S."/>
            <person name="Gariboldi M."/>
            <person name="Georgii-Hemming P."/>
            <person name="Gingeras T.R."/>
            <person name="Gojobori T."/>
            <person name="Green R.E."/>
            <person name="Gustincich S."/>
            <person name="Harbers M."/>
            <person name="Hayashi Y."/>
            <person name="Hensch T.K."/>
            <person name="Hirokawa N."/>
            <person name="Hill D."/>
            <person name="Huminiecki L."/>
            <person name="Iacono M."/>
            <person name="Ikeo K."/>
            <person name="Iwama A."/>
            <person name="Ishikawa T."/>
            <person name="Jakt M."/>
            <person name="Kanapin A."/>
            <person name="Katoh M."/>
            <person name="Kawasawa Y."/>
            <person name="Kelso J."/>
            <person name="Kitamura H."/>
            <person name="Kitano H."/>
            <person name="Kollias G."/>
            <person name="Krishnan S.P."/>
            <person name="Kruger A."/>
            <person name="Kummerfeld S.K."/>
            <person name="Kurochkin I.V."/>
            <person name="Lareau L.F."/>
            <person name="Lazarevic D."/>
            <person name="Lipovich L."/>
            <person name="Liu J."/>
            <person name="Liuni S."/>
            <person name="McWilliam S."/>
            <person name="Madan Babu M."/>
            <person name="Madera M."/>
            <person name="Marchionni L."/>
            <person name="Matsuda H."/>
            <person name="Matsuzawa S."/>
            <person name="Miki H."/>
            <person name="Mignone F."/>
            <person name="Miyake S."/>
            <person name="Morris K."/>
            <person name="Mottagui-Tabar S."/>
            <person name="Mulder N."/>
            <person name="Nakano N."/>
            <person name="Nakauchi H."/>
            <person name="Ng P."/>
            <person name="Nilsson R."/>
            <person name="Nishiguchi S."/>
            <person name="Nishikawa S."/>
            <person name="Nori F."/>
            <person name="Ohara O."/>
            <person name="Okazaki Y."/>
            <person name="Orlando V."/>
            <person name="Pang K.C."/>
            <person name="Pavan W.J."/>
            <person name="Pavesi G."/>
            <person name="Pesole G."/>
            <person name="Petrovsky N."/>
            <person name="Piazza S."/>
            <person name="Reed J."/>
            <person name="Reid J.F."/>
            <person name="Ring B.Z."/>
            <person name="Ringwald M."/>
            <person name="Rost B."/>
            <person name="Ruan Y."/>
            <person name="Salzberg S.L."/>
            <person name="Sandelin A."/>
            <person name="Schneider C."/>
            <person name="Schoenbach C."/>
            <person name="Sekiguchi K."/>
            <person name="Semple C.A."/>
            <person name="Seno S."/>
            <person name="Sessa L."/>
            <person name="Sheng Y."/>
            <person name="Shibata Y."/>
            <person name="Shimada H."/>
            <person name="Shimada K."/>
            <person name="Silva D."/>
            <person name="Sinclair B."/>
            <person name="Sperling S."/>
            <person name="Stupka E."/>
            <person name="Sugiura K."/>
            <person name="Sultana R."/>
            <person name="Takenaka Y."/>
            <person name="Taki K."/>
            <person name="Tammoja K."/>
            <person name="Tan S.L."/>
            <person name="Tang S."/>
            <person name="Taylor M.S."/>
            <person name="Tegner J."/>
            <person name="Teichmann S.A."/>
            <person name="Ueda H.R."/>
            <person name="van Nimwegen E."/>
            <person name="Verardo R."/>
            <person name="Wei C.L."/>
            <person name="Yagi K."/>
            <person name="Yamanishi H."/>
            <person name="Zabarovsky E."/>
            <person name="Zhu S."/>
            <person name="Zimmer A."/>
            <person name="Hide W."/>
            <person name="Bult C."/>
            <person name="Grimmond S.M."/>
            <person name="Teasdale R.D."/>
            <person name="Liu E.T."/>
            <person name="Brusic V."/>
            <person name="Quackenbush J."/>
            <person name="Wahlestedt C."/>
            <person name="Mattick J.S."/>
            <person name="Hume D.A."/>
            <person name="Kai C."/>
            <person name="Sasaki D."/>
            <person name="Tomaru Y."/>
            <person name="Fukuda S."/>
            <person name="Kanamori-Katayama M."/>
            <person name="Suzuki M."/>
            <person name="Aoki J."/>
            <person name="Arakawa T."/>
            <person name="Iida J."/>
            <person name="Imamura K."/>
            <person name="Itoh M."/>
            <person name="Kato T."/>
            <person name="Kawaji H."/>
            <person name="Kawagashira N."/>
            <person name="Kawashima T."/>
            <person name="Kojima M."/>
            <person name="Kondo S."/>
            <person name="Konno H."/>
            <person name="Nakano K."/>
            <person name="Ninomiya N."/>
            <person name="Nishio T."/>
            <person name="Okada M."/>
            <person name="Plessy C."/>
            <person name="Shibata K."/>
            <person name="Shiraki T."/>
            <person name="Suzuki S."/>
            <person name="Tagami M."/>
            <person name="Waki K."/>
            <person name="Watahiki A."/>
            <person name="Okamura-Oho Y."/>
            <person name="Suzuki H."/>
            <person name="Kawai J."/>
            <person name="Hayashizaki Y."/>
        </authorList>
    </citation>
    <scope>NUCLEOTIDE SEQUENCE [LARGE SCALE MRNA] (ISOFORMS 2 AND 3)</scope>
    <source>
        <strain>C57BL/6J</strain>
        <tissue>Kidney</tissue>
        <tissue>Testis</tissue>
    </source>
</reference>
<reference key="2">
    <citation type="journal article" date="2009" name="PLoS Biol.">
        <title>Lineage-specific biology revealed by a finished genome assembly of the mouse.</title>
        <authorList>
            <person name="Church D.M."/>
            <person name="Goodstadt L."/>
            <person name="Hillier L.W."/>
            <person name="Zody M.C."/>
            <person name="Goldstein S."/>
            <person name="She X."/>
            <person name="Bult C.J."/>
            <person name="Agarwala R."/>
            <person name="Cherry J.L."/>
            <person name="DiCuccio M."/>
            <person name="Hlavina W."/>
            <person name="Kapustin Y."/>
            <person name="Meric P."/>
            <person name="Maglott D."/>
            <person name="Birtle Z."/>
            <person name="Marques A.C."/>
            <person name="Graves T."/>
            <person name="Zhou S."/>
            <person name="Teague B."/>
            <person name="Potamousis K."/>
            <person name="Churas C."/>
            <person name="Place M."/>
            <person name="Herschleb J."/>
            <person name="Runnheim R."/>
            <person name="Forrest D."/>
            <person name="Amos-Landgraf J."/>
            <person name="Schwartz D.C."/>
            <person name="Cheng Z."/>
            <person name="Lindblad-Toh K."/>
            <person name="Eichler E.E."/>
            <person name="Ponting C.P."/>
        </authorList>
    </citation>
    <scope>NUCLEOTIDE SEQUENCE [LARGE SCALE GENOMIC DNA]</scope>
    <source>
        <strain>C57BL/6J</strain>
    </source>
</reference>
<reference key="3">
    <citation type="journal article" date="2004" name="Genome Res.">
        <title>The status, quality, and expansion of the NIH full-length cDNA project: the Mammalian Gene Collection (MGC).</title>
        <authorList>
            <consortium name="The MGC Project Team"/>
        </authorList>
    </citation>
    <scope>NUCLEOTIDE SEQUENCE [LARGE SCALE MRNA] OF 143-773 (ISOFORM 1)</scope>
    <source>
        <strain>FVB/N</strain>
        <tissue>Liver</tissue>
    </source>
</reference>
<reference key="4">
    <citation type="journal article" date="2004" name="DNA Res.">
        <title>Prediction of the coding sequences of mouse homologues of KIAA gene: IV. The complete nucleotide sequences of 500 mouse KIAA-homologous cDNAs identified by screening of terminal sequences of cDNA clones randomly sampled from size-fractionated libraries.</title>
        <authorList>
            <person name="Okazaki N."/>
            <person name="Kikuno R."/>
            <person name="Ohara R."/>
            <person name="Inamoto S."/>
            <person name="Koseki H."/>
            <person name="Hiraoka S."/>
            <person name="Saga Y."/>
            <person name="Seino S."/>
            <person name="Nishimura M."/>
            <person name="Kaisho T."/>
            <person name="Hoshino K."/>
            <person name="Kitamura H."/>
            <person name="Nagase T."/>
            <person name="Ohara O."/>
            <person name="Koga H."/>
        </authorList>
    </citation>
    <scope>NUCLEOTIDE SEQUENCE [LARGE SCALE MRNA] OF 249-773 (ISOFORM 1)</scope>
    <source>
        <tissue>Pancreatic islet</tissue>
    </source>
</reference>
<reference key="5">
    <citation type="journal article" date="2010" name="Cell">
        <title>A tissue-specific atlas of mouse protein phosphorylation and expression.</title>
        <authorList>
            <person name="Huttlin E.L."/>
            <person name="Jedrychowski M.P."/>
            <person name="Elias J.E."/>
            <person name="Goswami T."/>
            <person name="Rad R."/>
            <person name="Beausoleil S.A."/>
            <person name="Villen J."/>
            <person name="Haas W."/>
            <person name="Sowa M.E."/>
            <person name="Gygi S.P."/>
        </authorList>
    </citation>
    <scope>IDENTIFICATION BY MASS SPECTROMETRY [LARGE SCALE ANALYSIS]</scope>
    <source>
        <tissue>Spleen</tissue>
    </source>
</reference>
<protein>
    <recommendedName>
        <fullName>C-Maf-inducing protein</fullName>
        <shortName>c-Mip</shortName>
    </recommendedName>
</protein>
<dbReference type="EMBL" id="AK016712">
    <property type="protein sequence ID" value="BAB30392.1"/>
    <property type="molecule type" value="mRNA"/>
</dbReference>
<dbReference type="EMBL" id="AK085367">
    <property type="protein sequence ID" value="BAC39432.1"/>
    <property type="molecule type" value="mRNA"/>
</dbReference>
<dbReference type="EMBL" id="AC118207">
    <property type="status" value="NOT_ANNOTATED_CDS"/>
    <property type="molecule type" value="Genomic_DNA"/>
</dbReference>
<dbReference type="EMBL" id="AC121116">
    <property type="status" value="NOT_ANNOTATED_CDS"/>
    <property type="molecule type" value="Genomic_DNA"/>
</dbReference>
<dbReference type="EMBL" id="BC028834">
    <property type="protein sequence ID" value="AAH28834.1"/>
    <property type="molecule type" value="mRNA"/>
</dbReference>
<dbReference type="EMBL" id="AK173234">
    <property type="protein sequence ID" value="BAD32512.1"/>
    <property type="status" value="ALT_SEQ"/>
    <property type="molecule type" value="mRNA"/>
</dbReference>
<dbReference type="CCDS" id="CCDS52680.1">
    <molecule id="Q9D486-1"/>
</dbReference>
<dbReference type="CCDS" id="CCDS52681.1">
    <molecule id="Q9D486-2"/>
</dbReference>
<dbReference type="RefSeq" id="NP_001156734.1">
    <molecule id="Q9D486-1"/>
    <property type="nucleotide sequence ID" value="NM_001163262.1"/>
</dbReference>
<dbReference type="RefSeq" id="NP_083217.1">
    <molecule id="Q9D486-2"/>
    <property type="nucleotide sequence ID" value="NM_028941.1"/>
</dbReference>
<dbReference type="SMR" id="Q9D486"/>
<dbReference type="BioGRID" id="216749">
    <property type="interactions" value="1"/>
</dbReference>
<dbReference type="FunCoup" id="Q9D486">
    <property type="interactions" value="1686"/>
</dbReference>
<dbReference type="IntAct" id="Q9D486">
    <property type="interactions" value="1"/>
</dbReference>
<dbReference type="MINT" id="Q9D486"/>
<dbReference type="STRING" id="10090.ENSMUSP00000130264"/>
<dbReference type="GlyGen" id="Q9D486">
    <property type="glycosylation" value="2 sites, 1 O-linked glycan (1 site)"/>
</dbReference>
<dbReference type="iPTMnet" id="Q9D486"/>
<dbReference type="PhosphoSitePlus" id="Q9D486"/>
<dbReference type="PaxDb" id="10090-ENSMUSP00000130264"/>
<dbReference type="PeptideAtlas" id="Q9D486"/>
<dbReference type="ProteomicsDB" id="283316">
    <molecule id="Q9D486-1"/>
</dbReference>
<dbReference type="ProteomicsDB" id="283317">
    <molecule id="Q9D486-2"/>
</dbReference>
<dbReference type="ProteomicsDB" id="283318">
    <molecule id="Q9D486-3"/>
</dbReference>
<dbReference type="Pumba" id="Q9D486"/>
<dbReference type="Antibodypedia" id="44799">
    <property type="antibodies" value="85 antibodies from 21 providers"/>
</dbReference>
<dbReference type="Ensembl" id="ENSMUST00000095172.6">
    <molecule id="Q9D486-2"/>
    <property type="protein sequence ID" value="ENSMUSP00000092795.5"/>
    <property type="gene ID" value="ENSMUSG00000034390.17"/>
</dbReference>
<dbReference type="Ensembl" id="ENSMUST00000166750.9">
    <molecule id="Q9D486-1"/>
    <property type="protein sequence ID" value="ENSMUSP00000130264.2"/>
    <property type="gene ID" value="ENSMUSG00000034390.17"/>
</dbReference>
<dbReference type="GeneID" id="74440"/>
<dbReference type="KEGG" id="mmu:74440"/>
<dbReference type="UCSC" id="uc009noz.2">
    <molecule id="Q9D486-1"/>
    <property type="organism name" value="mouse"/>
</dbReference>
<dbReference type="UCSC" id="uc009npa.2">
    <molecule id="Q9D486-2"/>
    <property type="organism name" value="mouse"/>
</dbReference>
<dbReference type="AGR" id="MGI:1921690"/>
<dbReference type="CTD" id="80790"/>
<dbReference type="MGI" id="MGI:1921690">
    <property type="gene designation" value="Cmip"/>
</dbReference>
<dbReference type="VEuPathDB" id="HostDB:ENSMUSG00000034390"/>
<dbReference type="eggNOG" id="ENOG502QRSV">
    <property type="taxonomic scope" value="Eukaryota"/>
</dbReference>
<dbReference type="GeneTree" id="ENSGT00390000018220"/>
<dbReference type="HOGENOM" id="CLU_018505_0_0_1"/>
<dbReference type="InParanoid" id="Q9D486"/>
<dbReference type="OMA" id="DECIYQT"/>
<dbReference type="OrthoDB" id="10056090at2759"/>
<dbReference type="PhylomeDB" id="Q9D486"/>
<dbReference type="TreeFam" id="TF328575"/>
<dbReference type="BioGRID-ORCS" id="74440">
    <property type="hits" value="21 hits in 79 CRISPR screens"/>
</dbReference>
<dbReference type="ChiTaRS" id="Cmip">
    <property type="organism name" value="mouse"/>
</dbReference>
<dbReference type="PRO" id="PR:Q9D486"/>
<dbReference type="Proteomes" id="UP000000589">
    <property type="component" value="Chromosome 8"/>
</dbReference>
<dbReference type="RNAct" id="Q9D486">
    <property type="molecule type" value="protein"/>
</dbReference>
<dbReference type="Bgee" id="ENSMUSG00000034390">
    <property type="expression patterns" value="Expressed in entorhinal cortex and 257 other cell types or tissues"/>
</dbReference>
<dbReference type="GO" id="GO:0005829">
    <property type="term" value="C:cytosol"/>
    <property type="evidence" value="ECO:0007669"/>
    <property type="project" value="Ensembl"/>
</dbReference>
<dbReference type="GO" id="GO:0005654">
    <property type="term" value="C:nucleoplasm"/>
    <property type="evidence" value="ECO:0007669"/>
    <property type="project" value="Ensembl"/>
</dbReference>
<dbReference type="GO" id="GO:0001701">
    <property type="term" value="P:in utero embryonic development"/>
    <property type="evidence" value="ECO:0000315"/>
    <property type="project" value="MGI"/>
</dbReference>
<dbReference type="CDD" id="cd00821">
    <property type="entry name" value="PH"/>
    <property type="match status" value="1"/>
</dbReference>
<dbReference type="FunFam" id="3.80.10.10:FF:000030">
    <property type="entry name" value="C-Maf-inducing protein-like protein"/>
    <property type="match status" value="1"/>
</dbReference>
<dbReference type="Gene3D" id="3.80.10.10">
    <property type="entry name" value="Ribonuclease Inhibitor"/>
    <property type="match status" value="1"/>
</dbReference>
<dbReference type="InterPro" id="IPR052813">
    <property type="entry name" value="CMIP"/>
</dbReference>
<dbReference type="InterPro" id="IPR032675">
    <property type="entry name" value="LRR_dom_sf"/>
</dbReference>
<dbReference type="InterPro" id="IPR056429">
    <property type="entry name" value="PH_CMIP"/>
</dbReference>
<dbReference type="PANTHER" id="PTHR25480:SF0">
    <property type="entry name" value="C-MAF-INDUCING PROTEIN"/>
    <property type="match status" value="1"/>
</dbReference>
<dbReference type="PANTHER" id="PTHR25480">
    <property type="entry name" value="LEUCINE-RICH REPEAT-CONTAINING PROTEIN 73"/>
    <property type="match status" value="1"/>
</dbReference>
<dbReference type="Pfam" id="PF23066">
    <property type="entry name" value="PH_21"/>
    <property type="match status" value="1"/>
</dbReference>
<dbReference type="SUPFAM" id="SSF50729">
    <property type="entry name" value="PH domain-like"/>
    <property type="match status" value="1"/>
</dbReference>
<dbReference type="SUPFAM" id="SSF52047">
    <property type="entry name" value="RNI-like"/>
    <property type="match status" value="1"/>
</dbReference>
<sequence>MDVTSSSGGGDPRQIEETKPLLGSDVSGPEGTKVMGAVPCRRALLLCNGMRYKLLQEGDIQVCVIRHPRTFLSKILTSKFLRRWEPHHLTLADNSLASATPSGYMENSVSYSAIEDVQPLSWENAPKYCLQLTIPGGTVLLQAANSYLRDQWFHSLQWKKKIYKYKKVLSNPSRWEVVLKEIRTLVDMALTSPLQDDSINQAPLEIVSKLLSENTNLTTQEHENIIVAIAPLLENNHPPPDLCEFFCKHCRERPRSMVVIEVFTPVVQRILKHNMDFGKCPRLRLFTQEYILALNELNAGMEVVKKFIQSMHGPTGHCPHPRVLPNLVAVCLAAIYSCYEEFINSRDNSPSLKEIRNGCQQPCDRKPTLPLRLLHPSPDLVSQEATLSEPRLKSVVVASSEVHVEVERTSTAKPALTASTGNDSEPNLIDCLMVSPACGTMSIELGPQAGRTLGCHVEILKLLSDYDDWRPSLASLLQPIPFPKEALAHEKFTKELKYVIQRFAEDPRQEVHSCLLSVRAGKDGWFQLYSPGGVACDDDGELFASMVHILMGSCYKTKKFLLSLAENKLGPCMLLALRGNQTMAEILCLMLEYNIIDNNDTQLQIISTLESTDVGKRMYEQLCDRQRELKELQRKGGPTRLTLPSKSTDADLARLLSSGSFGNLENLSLAFTNVTSACAEHLIKLPSLKQLNLWSTQFGDAGLRLLSEHLTMLQVLNLCETPVTDAGLLALSSMKSLCSLNMNSTKLSADTYEDLKAKLPNLKEVDVRYTEAW</sequence>
<comment type="function">
    <text evidence="1">Plays a role in T-cell signaling pathway.</text>
</comment>
<comment type="subunit">
    <text evidence="1">Interacts with FLNA.</text>
</comment>
<comment type="subcellular location">
    <subcellularLocation>
        <location evidence="2">Nucleus</location>
    </subcellularLocation>
    <subcellularLocation>
        <location evidence="2">Cytoplasm</location>
    </subcellularLocation>
    <text evidence="2">Isoform 2 is translocated to the nucleus and is specifically recruited during minimal change nephrotic syndrome (MCNS). Detected in nuclear and cytoplasmic compartments during MCNS relapse. Expressed in cytoplasm only during MCNS remission and absent in normal patients.</text>
</comment>
<comment type="alternative products">
    <event type="alternative splicing"/>
    <isoform>
        <id>Q9D486-1</id>
        <name>1</name>
        <sequence type="displayed"/>
    </isoform>
    <isoform>
        <id>Q9D486-2</id>
        <name>2</name>
        <sequence type="described" ref="VSP_031113"/>
    </isoform>
    <isoform>
        <id>Q9D486-3</id>
        <name>3</name>
        <sequence type="described" ref="VSP_031114"/>
    </isoform>
</comment>
<comment type="sequence caution" evidence="5">
    <conflict type="miscellaneous discrepancy">
        <sequence resource="EMBL-CDS" id="BAD32512"/>
    </conflict>
    <text>Intron retention.</text>
</comment>
<feature type="chain" id="PRO_0000317629" description="C-Maf-inducing protein">
    <location>
        <begin position="1"/>
        <end position="773"/>
    </location>
</feature>
<feature type="domain" description="PH">
    <location>
        <begin position="54"/>
        <end position="163"/>
    </location>
</feature>
<feature type="repeat" description="LRR 1">
    <location>
        <begin position="663"/>
        <end position="686"/>
    </location>
</feature>
<feature type="repeat" description="LRR 2">
    <location>
        <begin position="687"/>
        <end position="707"/>
    </location>
</feature>
<feature type="repeat" description="LRR 3">
    <location>
        <begin position="712"/>
        <end position="732"/>
    </location>
</feature>
<feature type="repeat" description="LRR 4">
    <location>
        <begin position="736"/>
        <end position="756"/>
    </location>
</feature>
<feature type="region of interest" description="Disordered" evidence="3">
    <location>
        <begin position="1"/>
        <end position="28"/>
    </location>
</feature>
<feature type="modified residue" description="Phosphoserine" evidence="2">
    <location>
        <position position="349"/>
    </location>
</feature>
<feature type="modified residue" description="Phosphoserine" evidence="2">
    <location>
        <position position="377"/>
    </location>
</feature>
<feature type="modified residue" description="Phosphoserine" evidence="2">
    <location>
        <position position="382"/>
    </location>
</feature>
<feature type="modified residue" description="Phosphoserine" evidence="2">
    <location>
        <position position="660"/>
    </location>
</feature>
<feature type="splice variant" id="VSP_031113" description="In isoform 2." evidence="4">
    <original>MDVTSSSGGGDPRQIEETKPLLGSDVSGPEGTKVMGAVPCRRALLLCNGMRYKLLQEGDIQVCVIRHPRTFLSKILTSKFLRRWEPHHLTLADNSLASAT</original>
    <variation>MKTFGPGDEHPE</variation>
    <location>
        <begin position="1"/>
        <end position="100"/>
    </location>
</feature>
<feature type="splice variant" id="VSP_031114" description="In isoform 3." evidence="4">
    <location>
        <begin position="486"/>
        <end position="773"/>
    </location>
</feature>
<feature type="sequence conflict" description="In Ref. 2; BAB30392." evidence="5" ref="2">
    <original>T</original>
    <variation>A</variation>
    <location>
        <position position="138"/>
    </location>
</feature>
<feature type="sequence conflict" description="In Ref. 2; BAB30392." evidence="5" ref="2">
    <original>G</original>
    <variation>A</variation>
    <location>
        <position position="702"/>
    </location>
</feature>
<name>CMIP_MOUSE</name>
<evidence type="ECO:0000250" key="1"/>
<evidence type="ECO:0000250" key="2">
    <source>
        <dbReference type="UniProtKB" id="Q8IY22"/>
    </source>
</evidence>
<evidence type="ECO:0000256" key="3">
    <source>
        <dbReference type="SAM" id="MobiDB-lite"/>
    </source>
</evidence>
<evidence type="ECO:0000303" key="4">
    <source>
    </source>
</evidence>
<evidence type="ECO:0000305" key="5"/>